<feature type="chain" id="PRO_0000156180" description="Phosphopantetheine adenylyltransferase">
    <location>
        <begin position="1"/>
        <end position="169"/>
    </location>
</feature>
<feature type="binding site" evidence="1">
    <location>
        <begin position="9"/>
        <end position="10"/>
    </location>
    <ligand>
        <name>ATP</name>
        <dbReference type="ChEBI" id="CHEBI:30616"/>
    </ligand>
</feature>
<feature type="binding site" evidence="1">
    <location>
        <position position="9"/>
    </location>
    <ligand>
        <name>substrate</name>
    </ligand>
</feature>
<feature type="binding site" evidence="1">
    <location>
        <position position="17"/>
    </location>
    <ligand>
        <name>ATP</name>
        <dbReference type="ChEBI" id="CHEBI:30616"/>
    </ligand>
</feature>
<feature type="binding site" evidence="1">
    <location>
        <position position="41"/>
    </location>
    <ligand>
        <name>substrate</name>
    </ligand>
</feature>
<feature type="binding site" evidence="1">
    <location>
        <position position="73"/>
    </location>
    <ligand>
        <name>substrate</name>
    </ligand>
</feature>
<feature type="binding site" evidence="1">
    <location>
        <position position="87"/>
    </location>
    <ligand>
        <name>substrate</name>
    </ligand>
</feature>
<feature type="binding site" evidence="1">
    <location>
        <begin position="88"/>
        <end position="90"/>
    </location>
    <ligand>
        <name>ATP</name>
        <dbReference type="ChEBI" id="CHEBI:30616"/>
    </ligand>
</feature>
<feature type="binding site" evidence="1">
    <location>
        <position position="98"/>
    </location>
    <ligand>
        <name>ATP</name>
        <dbReference type="ChEBI" id="CHEBI:30616"/>
    </ligand>
</feature>
<feature type="binding site" evidence="1">
    <location>
        <begin position="123"/>
        <end position="129"/>
    </location>
    <ligand>
        <name>ATP</name>
        <dbReference type="ChEBI" id="CHEBI:30616"/>
    </ligand>
</feature>
<feature type="site" description="Transition state stabilizer" evidence="1">
    <location>
        <position position="17"/>
    </location>
</feature>
<proteinExistence type="inferred from homology"/>
<accession>Q7VTP4</accession>
<keyword id="KW-0067">ATP-binding</keyword>
<keyword id="KW-0173">Coenzyme A biosynthesis</keyword>
<keyword id="KW-0963">Cytoplasm</keyword>
<keyword id="KW-0460">Magnesium</keyword>
<keyword id="KW-0547">Nucleotide-binding</keyword>
<keyword id="KW-0548">Nucleotidyltransferase</keyword>
<keyword id="KW-1185">Reference proteome</keyword>
<keyword id="KW-0808">Transferase</keyword>
<evidence type="ECO:0000255" key="1">
    <source>
        <dbReference type="HAMAP-Rule" id="MF_00151"/>
    </source>
</evidence>
<reference key="1">
    <citation type="journal article" date="2003" name="Nat. Genet.">
        <title>Comparative analysis of the genome sequences of Bordetella pertussis, Bordetella parapertussis and Bordetella bronchiseptica.</title>
        <authorList>
            <person name="Parkhill J."/>
            <person name="Sebaihia M."/>
            <person name="Preston A."/>
            <person name="Murphy L.D."/>
            <person name="Thomson N.R."/>
            <person name="Harris D.E."/>
            <person name="Holden M.T.G."/>
            <person name="Churcher C.M."/>
            <person name="Bentley S.D."/>
            <person name="Mungall K.L."/>
            <person name="Cerdeno-Tarraga A.-M."/>
            <person name="Temple L."/>
            <person name="James K.D."/>
            <person name="Harris B."/>
            <person name="Quail M.A."/>
            <person name="Achtman M."/>
            <person name="Atkin R."/>
            <person name="Baker S."/>
            <person name="Basham D."/>
            <person name="Bason N."/>
            <person name="Cherevach I."/>
            <person name="Chillingworth T."/>
            <person name="Collins M."/>
            <person name="Cronin A."/>
            <person name="Davis P."/>
            <person name="Doggett J."/>
            <person name="Feltwell T."/>
            <person name="Goble A."/>
            <person name="Hamlin N."/>
            <person name="Hauser H."/>
            <person name="Holroyd S."/>
            <person name="Jagels K."/>
            <person name="Leather S."/>
            <person name="Moule S."/>
            <person name="Norberczak H."/>
            <person name="O'Neil S."/>
            <person name="Ormond D."/>
            <person name="Price C."/>
            <person name="Rabbinowitsch E."/>
            <person name="Rutter S."/>
            <person name="Sanders M."/>
            <person name="Saunders D."/>
            <person name="Seeger K."/>
            <person name="Sharp S."/>
            <person name="Simmonds M."/>
            <person name="Skelton J."/>
            <person name="Squares R."/>
            <person name="Squares S."/>
            <person name="Stevens K."/>
            <person name="Unwin L."/>
            <person name="Whitehead S."/>
            <person name="Barrell B.G."/>
            <person name="Maskell D.J."/>
        </authorList>
    </citation>
    <scope>NUCLEOTIDE SEQUENCE [LARGE SCALE GENOMIC DNA]</scope>
    <source>
        <strain>Tohama I / ATCC BAA-589 / NCTC 13251</strain>
    </source>
</reference>
<gene>
    <name evidence="1" type="primary">coaD</name>
    <name type="ordered locus">BP3471</name>
</gene>
<name>COAD_BORPE</name>
<sequence length="169" mass="19184">MIIAVYPGTFDPLTRGHEDLVRRAATLFDKVVVGIAHSRNKKPFFTIEERVDIAREVLGHYPNVEVHSFGGLLKDFVRDQNGRVIIRGLRAVSDFEYEFQMAGMNRHLLPDVETMFMTPSDQYQFISGTIVREIAQLGGDVSKFVFPSVERWLQAKAKERREQSAQGGA</sequence>
<protein>
    <recommendedName>
        <fullName evidence="1">Phosphopantetheine adenylyltransferase</fullName>
        <ecNumber evidence="1">2.7.7.3</ecNumber>
    </recommendedName>
    <alternativeName>
        <fullName evidence="1">Dephospho-CoA pyrophosphorylase</fullName>
    </alternativeName>
    <alternativeName>
        <fullName evidence="1">Pantetheine-phosphate adenylyltransferase</fullName>
        <shortName evidence="1">PPAT</shortName>
    </alternativeName>
</protein>
<dbReference type="EC" id="2.7.7.3" evidence="1"/>
<dbReference type="EMBL" id="BX640421">
    <property type="protein sequence ID" value="CAE43734.1"/>
    <property type="molecule type" value="Genomic_DNA"/>
</dbReference>
<dbReference type="RefSeq" id="NP_881994.1">
    <property type="nucleotide sequence ID" value="NC_002929.2"/>
</dbReference>
<dbReference type="RefSeq" id="WP_003808574.1">
    <property type="nucleotide sequence ID" value="NZ_CP039022.1"/>
</dbReference>
<dbReference type="SMR" id="Q7VTP4"/>
<dbReference type="STRING" id="257313.BP3471"/>
<dbReference type="PaxDb" id="257313-BP3471"/>
<dbReference type="GeneID" id="93202597"/>
<dbReference type="KEGG" id="bpe:BP3471"/>
<dbReference type="PATRIC" id="fig|257313.5.peg.3759"/>
<dbReference type="eggNOG" id="COG0669">
    <property type="taxonomic scope" value="Bacteria"/>
</dbReference>
<dbReference type="HOGENOM" id="CLU_100149_0_1_4"/>
<dbReference type="UniPathway" id="UPA00241">
    <property type="reaction ID" value="UER00355"/>
</dbReference>
<dbReference type="Proteomes" id="UP000002676">
    <property type="component" value="Chromosome"/>
</dbReference>
<dbReference type="GO" id="GO:0005737">
    <property type="term" value="C:cytoplasm"/>
    <property type="evidence" value="ECO:0007669"/>
    <property type="project" value="UniProtKB-SubCell"/>
</dbReference>
<dbReference type="GO" id="GO:0005524">
    <property type="term" value="F:ATP binding"/>
    <property type="evidence" value="ECO:0007669"/>
    <property type="project" value="UniProtKB-KW"/>
</dbReference>
<dbReference type="GO" id="GO:0004595">
    <property type="term" value="F:pantetheine-phosphate adenylyltransferase activity"/>
    <property type="evidence" value="ECO:0007669"/>
    <property type="project" value="UniProtKB-UniRule"/>
</dbReference>
<dbReference type="GO" id="GO:0015937">
    <property type="term" value="P:coenzyme A biosynthetic process"/>
    <property type="evidence" value="ECO:0007669"/>
    <property type="project" value="UniProtKB-UniRule"/>
</dbReference>
<dbReference type="CDD" id="cd02163">
    <property type="entry name" value="PPAT"/>
    <property type="match status" value="1"/>
</dbReference>
<dbReference type="Gene3D" id="3.40.50.620">
    <property type="entry name" value="HUPs"/>
    <property type="match status" value="1"/>
</dbReference>
<dbReference type="HAMAP" id="MF_00151">
    <property type="entry name" value="PPAT_bact"/>
    <property type="match status" value="1"/>
</dbReference>
<dbReference type="InterPro" id="IPR004821">
    <property type="entry name" value="Cyt_trans-like"/>
</dbReference>
<dbReference type="InterPro" id="IPR001980">
    <property type="entry name" value="PPAT"/>
</dbReference>
<dbReference type="InterPro" id="IPR014729">
    <property type="entry name" value="Rossmann-like_a/b/a_fold"/>
</dbReference>
<dbReference type="NCBIfam" id="TIGR01510">
    <property type="entry name" value="coaD_prev_kdtB"/>
    <property type="match status" value="1"/>
</dbReference>
<dbReference type="NCBIfam" id="TIGR00125">
    <property type="entry name" value="cyt_tran_rel"/>
    <property type="match status" value="1"/>
</dbReference>
<dbReference type="PANTHER" id="PTHR21342">
    <property type="entry name" value="PHOSPHOPANTETHEINE ADENYLYLTRANSFERASE"/>
    <property type="match status" value="1"/>
</dbReference>
<dbReference type="PANTHER" id="PTHR21342:SF1">
    <property type="entry name" value="PHOSPHOPANTETHEINE ADENYLYLTRANSFERASE"/>
    <property type="match status" value="1"/>
</dbReference>
<dbReference type="Pfam" id="PF01467">
    <property type="entry name" value="CTP_transf_like"/>
    <property type="match status" value="1"/>
</dbReference>
<dbReference type="PRINTS" id="PR01020">
    <property type="entry name" value="LPSBIOSNTHSS"/>
</dbReference>
<dbReference type="SUPFAM" id="SSF52374">
    <property type="entry name" value="Nucleotidylyl transferase"/>
    <property type="match status" value="1"/>
</dbReference>
<comment type="function">
    <text evidence="1">Reversibly transfers an adenylyl group from ATP to 4'-phosphopantetheine, yielding dephospho-CoA (dPCoA) and pyrophosphate.</text>
</comment>
<comment type="catalytic activity">
    <reaction evidence="1">
        <text>(R)-4'-phosphopantetheine + ATP + H(+) = 3'-dephospho-CoA + diphosphate</text>
        <dbReference type="Rhea" id="RHEA:19801"/>
        <dbReference type="ChEBI" id="CHEBI:15378"/>
        <dbReference type="ChEBI" id="CHEBI:30616"/>
        <dbReference type="ChEBI" id="CHEBI:33019"/>
        <dbReference type="ChEBI" id="CHEBI:57328"/>
        <dbReference type="ChEBI" id="CHEBI:61723"/>
        <dbReference type="EC" id="2.7.7.3"/>
    </reaction>
</comment>
<comment type="cofactor">
    <cofactor evidence="1">
        <name>Mg(2+)</name>
        <dbReference type="ChEBI" id="CHEBI:18420"/>
    </cofactor>
</comment>
<comment type="pathway">
    <text evidence="1">Cofactor biosynthesis; coenzyme A biosynthesis; CoA from (R)-pantothenate: step 4/5.</text>
</comment>
<comment type="subunit">
    <text evidence="1">Homohexamer.</text>
</comment>
<comment type="subcellular location">
    <subcellularLocation>
        <location evidence="1">Cytoplasm</location>
    </subcellularLocation>
</comment>
<comment type="similarity">
    <text evidence="1">Belongs to the bacterial CoaD family.</text>
</comment>
<organism>
    <name type="scientific">Bordetella pertussis (strain Tohama I / ATCC BAA-589 / NCTC 13251)</name>
    <dbReference type="NCBI Taxonomy" id="257313"/>
    <lineage>
        <taxon>Bacteria</taxon>
        <taxon>Pseudomonadati</taxon>
        <taxon>Pseudomonadota</taxon>
        <taxon>Betaproteobacteria</taxon>
        <taxon>Burkholderiales</taxon>
        <taxon>Alcaligenaceae</taxon>
        <taxon>Bordetella</taxon>
    </lineage>
</organism>